<organism>
    <name type="scientific">Corynebacterium jeikeium (strain K411)</name>
    <dbReference type="NCBI Taxonomy" id="306537"/>
    <lineage>
        <taxon>Bacteria</taxon>
        <taxon>Bacillati</taxon>
        <taxon>Actinomycetota</taxon>
        <taxon>Actinomycetes</taxon>
        <taxon>Mycobacteriales</taxon>
        <taxon>Corynebacteriaceae</taxon>
        <taxon>Corynebacterium</taxon>
    </lineage>
</organism>
<comment type="function">
    <text evidence="1">Nucleoside triphosphate pyrophosphatase. May have a dual role in cell division arrest and in preventing the incorporation of modified nucleotides into cellular nucleic acids.</text>
</comment>
<comment type="catalytic activity">
    <reaction evidence="1">
        <text>a ribonucleoside 5'-triphosphate + H2O = a ribonucleoside 5'-phosphate + diphosphate + H(+)</text>
        <dbReference type="Rhea" id="RHEA:23996"/>
        <dbReference type="ChEBI" id="CHEBI:15377"/>
        <dbReference type="ChEBI" id="CHEBI:15378"/>
        <dbReference type="ChEBI" id="CHEBI:33019"/>
        <dbReference type="ChEBI" id="CHEBI:58043"/>
        <dbReference type="ChEBI" id="CHEBI:61557"/>
        <dbReference type="EC" id="3.6.1.9"/>
    </reaction>
</comment>
<comment type="catalytic activity">
    <reaction evidence="1">
        <text>a 2'-deoxyribonucleoside 5'-triphosphate + H2O = a 2'-deoxyribonucleoside 5'-phosphate + diphosphate + H(+)</text>
        <dbReference type="Rhea" id="RHEA:44644"/>
        <dbReference type="ChEBI" id="CHEBI:15377"/>
        <dbReference type="ChEBI" id="CHEBI:15378"/>
        <dbReference type="ChEBI" id="CHEBI:33019"/>
        <dbReference type="ChEBI" id="CHEBI:61560"/>
        <dbReference type="ChEBI" id="CHEBI:65317"/>
        <dbReference type="EC" id="3.6.1.9"/>
    </reaction>
</comment>
<comment type="cofactor">
    <cofactor evidence="1">
        <name>a divalent metal cation</name>
        <dbReference type="ChEBI" id="CHEBI:60240"/>
    </cofactor>
</comment>
<comment type="subcellular location">
    <subcellularLocation>
        <location evidence="1">Cytoplasm</location>
    </subcellularLocation>
</comment>
<comment type="similarity">
    <text evidence="1">Belongs to the Maf family.</text>
</comment>
<sequence>MQLTLASTSPAREKVLNAAGVIPRKVSPGVDEEAAVADLVNPTPAQYVQHLATAKARAVDGELVLGGDSMLLIDGELQGKPHTREETVRRWRQQRGKRAELVTGHALFDAATGQIYEEVVATQIQFAEVSERAIEAYAATGEPLECAGAFTLEALGGWFIESIDGHPSAVIGLSLPALRRGLDYFGYDFSDLWG</sequence>
<keyword id="KW-0963">Cytoplasm</keyword>
<keyword id="KW-0378">Hydrolase</keyword>
<keyword id="KW-0546">Nucleotide metabolism</keyword>
<keyword id="KW-1185">Reference proteome</keyword>
<feature type="chain" id="PRO_0000267291" description="Nucleoside triphosphate pyrophosphatase">
    <location>
        <begin position="1"/>
        <end position="194"/>
    </location>
</feature>
<feature type="active site" description="Proton acceptor" evidence="1">
    <location>
        <position position="68"/>
    </location>
</feature>
<reference key="1">
    <citation type="journal article" date="2005" name="J. Bacteriol.">
        <title>Complete genome sequence and analysis of the multiresistant nosocomial pathogen Corynebacterium jeikeium K411, a lipid-requiring bacterium of the human skin flora.</title>
        <authorList>
            <person name="Tauch A."/>
            <person name="Kaiser O."/>
            <person name="Hain T."/>
            <person name="Goesmann A."/>
            <person name="Weisshaar B."/>
            <person name="Albersmeier A."/>
            <person name="Bekel T."/>
            <person name="Bischoff N."/>
            <person name="Brune I."/>
            <person name="Chakraborty T."/>
            <person name="Kalinowski J."/>
            <person name="Meyer F."/>
            <person name="Rupp O."/>
            <person name="Schneiker S."/>
            <person name="Viehoever P."/>
            <person name="Puehler A."/>
        </authorList>
    </citation>
    <scope>NUCLEOTIDE SEQUENCE [LARGE SCALE GENOMIC DNA]</scope>
    <source>
        <strain>K411</strain>
    </source>
</reference>
<name>NTPP_CORJK</name>
<evidence type="ECO:0000255" key="1">
    <source>
        <dbReference type="HAMAP-Rule" id="MF_00528"/>
    </source>
</evidence>
<proteinExistence type="inferred from homology"/>
<dbReference type="EC" id="3.6.1.9" evidence="1"/>
<dbReference type="EMBL" id="CR931997">
    <property type="protein sequence ID" value="CAI37841.1"/>
    <property type="molecule type" value="Genomic_DNA"/>
</dbReference>
<dbReference type="RefSeq" id="WP_011274038.1">
    <property type="nucleotide sequence ID" value="NC_007164.1"/>
</dbReference>
<dbReference type="SMR" id="Q4JTL6"/>
<dbReference type="STRING" id="306537.jk1664"/>
<dbReference type="KEGG" id="cjk:jk1664"/>
<dbReference type="PATRIC" id="fig|306537.10.peg.1684"/>
<dbReference type="eggNOG" id="COG0424">
    <property type="taxonomic scope" value="Bacteria"/>
</dbReference>
<dbReference type="HOGENOM" id="CLU_040416_1_2_11"/>
<dbReference type="OrthoDB" id="3527985at2"/>
<dbReference type="Proteomes" id="UP000000545">
    <property type="component" value="Chromosome"/>
</dbReference>
<dbReference type="GO" id="GO:0005737">
    <property type="term" value="C:cytoplasm"/>
    <property type="evidence" value="ECO:0007669"/>
    <property type="project" value="UniProtKB-SubCell"/>
</dbReference>
<dbReference type="GO" id="GO:0047429">
    <property type="term" value="F:nucleoside triphosphate diphosphatase activity"/>
    <property type="evidence" value="ECO:0007669"/>
    <property type="project" value="UniProtKB-EC"/>
</dbReference>
<dbReference type="GO" id="GO:0009117">
    <property type="term" value="P:nucleotide metabolic process"/>
    <property type="evidence" value="ECO:0007669"/>
    <property type="project" value="UniProtKB-KW"/>
</dbReference>
<dbReference type="CDD" id="cd00555">
    <property type="entry name" value="Maf"/>
    <property type="match status" value="1"/>
</dbReference>
<dbReference type="Gene3D" id="3.90.950.10">
    <property type="match status" value="1"/>
</dbReference>
<dbReference type="HAMAP" id="MF_00528">
    <property type="entry name" value="Maf"/>
    <property type="match status" value="1"/>
</dbReference>
<dbReference type="InterPro" id="IPR029001">
    <property type="entry name" value="ITPase-like_fam"/>
</dbReference>
<dbReference type="InterPro" id="IPR003697">
    <property type="entry name" value="Maf-like"/>
</dbReference>
<dbReference type="NCBIfam" id="TIGR00172">
    <property type="entry name" value="maf"/>
    <property type="match status" value="1"/>
</dbReference>
<dbReference type="PANTHER" id="PTHR43213">
    <property type="entry name" value="BIFUNCTIONAL DTTP/UTP PYROPHOSPHATASE/METHYLTRANSFERASE PROTEIN-RELATED"/>
    <property type="match status" value="1"/>
</dbReference>
<dbReference type="PANTHER" id="PTHR43213:SF5">
    <property type="entry name" value="BIFUNCTIONAL DTTP_UTP PYROPHOSPHATASE_METHYLTRANSFERASE PROTEIN-RELATED"/>
    <property type="match status" value="1"/>
</dbReference>
<dbReference type="Pfam" id="PF02545">
    <property type="entry name" value="Maf"/>
    <property type="match status" value="1"/>
</dbReference>
<dbReference type="PIRSF" id="PIRSF006305">
    <property type="entry name" value="Maf"/>
    <property type="match status" value="1"/>
</dbReference>
<dbReference type="SUPFAM" id="SSF52972">
    <property type="entry name" value="ITPase-like"/>
    <property type="match status" value="1"/>
</dbReference>
<gene>
    <name type="ordered locus">jk1664</name>
</gene>
<accession>Q4JTL6</accession>
<protein>
    <recommendedName>
        <fullName evidence="1">Nucleoside triphosphate pyrophosphatase</fullName>
        <ecNumber evidence="1">3.6.1.9</ecNumber>
    </recommendedName>
    <alternativeName>
        <fullName evidence="1">Nucleotide pyrophosphatase</fullName>
        <shortName evidence="1">Nucleotide PPase</shortName>
    </alternativeName>
</protein>